<organism>
    <name type="scientific">Vibrio cholerae serotype O1 (strain ATCC 39315 / El Tor Inaba N16961)</name>
    <dbReference type="NCBI Taxonomy" id="243277"/>
    <lineage>
        <taxon>Bacteria</taxon>
        <taxon>Pseudomonadati</taxon>
        <taxon>Pseudomonadota</taxon>
        <taxon>Gammaproteobacteria</taxon>
        <taxon>Vibrionales</taxon>
        <taxon>Vibrionaceae</taxon>
        <taxon>Vibrio</taxon>
    </lineage>
</organism>
<proteinExistence type="inferred from homology"/>
<name>SDHD_VIBCH</name>
<keyword id="KW-0456">Lyase</keyword>
<keyword id="KW-0663">Pyridoxal phosphate</keyword>
<keyword id="KW-1185">Reference proteome</keyword>
<sequence>MMTINIEQLTEQYPLVKELIELKEVSWFNPSITRLEEGLSYVGLGSEDIQDASQRLKRFAPYLAKAFPETAKTNGIIESEVVPISEMQSVLEREYDTPIQGRLLLKKDSHLPISGSIKARGGIYEVLTHAEKLAIEAGLLTESDDYSKLLNEEFRDFFKRFSIAVGSTGNLGMSIGIMSAKLGFSVSVHMSADARAWKKNRLRALGVNVIEYAQDYGVAVAQGRKEAENDPTCFFIDDENSQTLFLGYSVAGERLKKQFDEKGIVVDAQHPLFVYLPCGVGGGPGGVAFGLKMAFGDNVHCIFAEPTHSPCMMLGVHTGLHDAISVQDIGIDNITAADGLAVGRASGFVGRAMERLLDGYLTISDERMYRLLGQLNEAENIQLEPSALAGMIGPIVVTKSVEYRARMQFDDTVMGNATHLVWATGGGMVPAEEMDSYLKNR</sequence>
<comment type="catalytic activity">
    <reaction evidence="1">
        <text>D-serine = pyruvate + NH4(+)</text>
        <dbReference type="Rhea" id="RHEA:13977"/>
        <dbReference type="ChEBI" id="CHEBI:15361"/>
        <dbReference type="ChEBI" id="CHEBI:28938"/>
        <dbReference type="ChEBI" id="CHEBI:35247"/>
        <dbReference type="EC" id="4.3.1.18"/>
    </reaction>
</comment>
<comment type="cofactor">
    <cofactor evidence="1">
        <name>pyridoxal 5'-phosphate</name>
        <dbReference type="ChEBI" id="CHEBI:597326"/>
    </cofactor>
</comment>
<comment type="similarity">
    <text evidence="1">Belongs to the serine/threonine dehydratase family. DsdA subfamily.</text>
</comment>
<dbReference type="EC" id="4.3.1.18" evidence="1"/>
<dbReference type="EMBL" id="AE003853">
    <property type="protein sequence ID" value="AAF96773.1"/>
    <property type="molecule type" value="Genomic_DNA"/>
</dbReference>
<dbReference type="PIR" id="C82406">
    <property type="entry name" value="C82406"/>
</dbReference>
<dbReference type="RefSeq" id="NP_233261.1">
    <property type="nucleotide sequence ID" value="NC_002506.1"/>
</dbReference>
<dbReference type="RefSeq" id="WP_001885353.1">
    <property type="nucleotide sequence ID" value="NZ_LT906615.1"/>
</dbReference>
<dbReference type="SMR" id="Q9KL72"/>
<dbReference type="STRING" id="243277.VC_A0875"/>
<dbReference type="DNASU" id="2612586"/>
<dbReference type="EnsemblBacteria" id="AAF96773">
    <property type="protein sequence ID" value="AAF96773"/>
    <property type="gene ID" value="VC_A0875"/>
</dbReference>
<dbReference type="KEGG" id="vch:VC_A0875"/>
<dbReference type="PATRIC" id="fig|243277.26.peg.3491"/>
<dbReference type="eggNOG" id="COG3048">
    <property type="taxonomic scope" value="Bacteria"/>
</dbReference>
<dbReference type="HOGENOM" id="CLU_035707_0_0_6"/>
<dbReference type="Proteomes" id="UP000000584">
    <property type="component" value="Chromosome 2"/>
</dbReference>
<dbReference type="GO" id="GO:0008721">
    <property type="term" value="F:D-serine ammonia-lyase activity"/>
    <property type="evidence" value="ECO:0000318"/>
    <property type="project" value="GO_Central"/>
</dbReference>
<dbReference type="GO" id="GO:0016836">
    <property type="term" value="F:hydro-lyase activity"/>
    <property type="evidence" value="ECO:0007669"/>
    <property type="project" value="UniProtKB-UniRule"/>
</dbReference>
<dbReference type="GO" id="GO:0030170">
    <property type="term" value="F:pyridoxal phosphate binding"/>
    <property type="evidence" value="ECO:0007669"/>
    <property type="project" value="InterPro"/>
</dbReference>
<dbReference type="GO" id="GO:0036088">
    <property type="term" value="P:D-serine catabolic process"/>
    <property type="evidence" value="ECO:0000318"/>
    <property type="project" value="GO_Central"/>
</dbReference>
<dbReference type="CDD" id="cd06447">
    <property type="entry name" value="D-Ser-dehyd"/>
    <property type="match status" value="1"/>
</dbReference>
<dbReference type="FunFam" id="3.40.50.1100:FF:000018">
    <property type="entry name" value="D-serine dehydratase"/>
    <property type="match status" value="1"/>
</dbReference>
<dbReference type="Gene3D" id="3.40.50.1100">
    <property type="match status" value="2"/>
</dbReference>
<dbReference type="HAMAP" id="MF_01030">
    <property type="entry name" value="D_Ser_dehydrat"/>
    <property type="match status" value="1"/>
</dbReference>
<dbReference type="InterPro" id="IPR011780">
    <property type="entry name" value="D_Ser_am_lyase"/>
</dbReference>
<dbReference type="InterPro" id="IPR050147">
    <property type="entry name" value="Ser/Thr_Dehydratase"/>
</dbReference>
<dbReference type="InterPro" id="IPR000634">
    <property type="entry name" value="Ser/Thr_deHydtase_PyrdxlP-BS"/>
</dbReference>
<dbReference type="InterPro" id="IPR001926">
    <property type="entry name" value="TrpB-like_PALP"/>
</dbReference>
<dbReference type="InterPro" id="IPR036052">
    <property type="entry name" value="TrpB-like_PALP_sf"/>
</dbReference>
<dbReference type="NCBIfam" id="TIGR02035">
    <property type="entry name" value="D_Ser_am_lyase"/>
    <property type="match status" value="1"/>
</dbReference>
<dbReference type="NCBIfam" id="NF002823">
    <property type="entry name" value="PRK02991.1"/>
    <property type="match status" value="1"/>
</dbReference>
<dbReference type="PANTHER" id="PTHR48078:SF9">
    <property type="entry name" value="D-SERINE DEHYDRATASE"/>
    <property type="match status" value="1"/>
</dbReference>
<dbReference type="PANTHER" id="PTHR48078">
    <property type="entry name" value="THREONINE DEHYDRATASE, MITOCHONDRIAL-RELATED"/>
    <property type="match status" value="1"/>
</dbReference>
<dbReference type="Pfam" id="PF00291">
    <property type="entry name" value="PALP"/>
    <property type="match status" value="1"/>
</dbReference>
<dbReference type="SUPFAM" id="SSF53686">
    <property type="entry name" value="Tryptophan synthase beta subunit-like PLP-dependent enzymes"/>
    <property type="match status" value="1"/>
</dbReference>
<dbReference type="PROSITE" id="PS00165">
    <property type="entry name" value="DEHYDRATASE_SER_THR"/>
    <property type="match status" value="1"/>
</dbReference>
<gene>
    <name evidence="1" type="primary">dsdA</name>
    <name type="ordered locus">VC_A0875</name>
</gene>
<evidence type="ECO:0000255" key="1">
    <source>
        <dbReference type="HAMAP-Rule" id="MF_01030"/>
    </source>
</evidence>
<reference key="1">
    <citation type="journal article" date="2000" name="Nature">
        <title>DNA sequence of both chromosomes of the cholera pathogen Vibrio cholerae.</title>
        <authorList>
            <person name="Heidelberg J.F."/>
            <person name="Eisen J.A."/>
            <person name="Nelson W.C."/>
            <person name="Clayton R.A."/>
            <person name="Gwinn M.L."/>
            <person name="Dodson R.J."/>
            <person name="Haft D.H."/>
            <person name="Hickey E.K."/>
            <person name="Peterson J.D."/>
            <person name="Umayam L.A."/>
            <person name="Gill S.R."/>
            <person name="Nelson K.E."/>
            <person name="Read T.D."/>
            <person name="Tettelin H."/>
            <person name="Richardson D.L."/>
            <person name="Ermolaeva M.D."/>
            <person name="Vamathevan J.J."/>
            <person name="Bass S."/>
            <person name="Qin H."/>
            <person name="Dragoi I."/>
            <person name="Sellers P."/>
            <person name="McDonald L.A."/>
            <person name="Utterback T.R."/>
            <person name="Fleischmann R.D."/>
            <person name="Nierman W.C."/>
            <person name="White O."/>
            <person name="Salzberg S.L."/>
            <person name="Smith H.O."/>
            <person name="Colwell R.R."/>
            <person name="Mekalanos J.J."/>
            <person name="Venter J.C."/>
            <person name="Fraser C.M."/>
        </authorList>
    </citation>
    <scope>NUCLEOTIDE SEQUENCE [LARGE SCALE GENOMIC DNA]</scope>
    <source>
        <strain>ATCC 39315 / El Tor Inaba N16961</strain>
    </source>
</reference>
<feature type="chain" id="PRO_0000185622" description="Probable D-serine dehydratase">
    <location>
        <begin position="1"/>
        <end position="441"/>
    </location>
</feature>
<feature type="modified residue" description="N6-(pyridoxal phosphate)lysine" evidence="1">
    <location>
        <position position="118"/>
    </location>
</feature>
<protein>
    <recommendedName>
        <fullName evidence="1">Probable D-serine dehydratase</fullName>
        <ecNumber evidence="1">4.3.1.18</ecNumber>
    </recommendedName>
    <alternativeName>
        <fullName evidence="1">D-serine deaminase</fullName>
        <shortName evidence="1">DSD</shortName>
    </alternativeName>
</protein>
<accession>Q9KL72</accession>